<gene>
    <name evidence="1" type="primary">gcvP</name>
    <name type="ordered locus">YPA_0362</name>
</gene>
<comment type="function">
    <text evidence="1">The glycine cleavage system catalyzes the degradation of glycine. The P protein binds the alpha-amino group of glycine through its pyridoxal phosphate cofactor; CO(2) is released and the remaining methylamine moiety is then transferred to the lipoamide cofactor of the H protein.</text>
</comment>
<comment type="catalytic activity">
    <reaction evidence="1">
        <text>N(6)-[(R)-lipoyl]-L-lysyl-[glycine-cleavage complex H protein] + glycine + H(+) = N(6)-[(R)-S(8)-aminomethyldihydrolipoyl]-L-lysyl-[glycine-cleavage complex H protein] + CO2</text>
        <dbReference type="Rhea" id="RHEA:24304"/>
        <dbReference type="Rhea" id="RHEA-COMP:10494"/>
        <dbReference type="Rhea" id="RHEA-COMP:10495"/>
        <dbReference type="ChEBI" id="CHEBI:15378"/>
        <dbReference type="ChEBI" id="CHEBI:16526"/>
        <dbReference type="ChEBI" id="CHEBI:57305"/>
        <dbReference type="ChEBI" id="CHEBI:83099"/>
        <dbReference type="ChEBI" id="CHEBI:83143"/>
        <dbReference type="EC" id="1.4.4.2"/>
    </reaction>
</comment>
<comment type="cofactor">
    <cofactor evidence="1">
        <name>pyridoxal 5'-phosphate</name>
        <dbReference type="ChEBI" id="CHEBI:597326"/>
    </cofactor>
</comment>
<comment type="subunit">
    <text evidence="1">The glycine cleavage system is composed of four proteins: P, T, L and H.</text>
</comment>
<comment type="similarity">
    <text evidence="1">Belongs to the GcvP family.</text>
</comment>
<accession>Q1CB42</accession>
<feature type="chain" id="PRO_1000045630" description="Glycine dehydrogenase (decarboxylating)">
    <location>
        <begin position="1"/>
        <end position="959"/>
    </location>
</feature>
<feature type="modified residue" description="N6-(pyridoxal phosphate)lysine" evidence="1">
    <location>
        <position position="708"/>
    </location>
</feature>
<evidence type="ECO:0000255" key="1">
    <source>
        <dbReference type="HAMAP-Rule" id="MF_00711"/>
    </source>
</evidence>
<sequence>MTQNLSQLEHNDAFIQRHIGSSVEQQQQMLAAVGASSLSTLIQQIVPADIQLPGPPPVGEAATEHQALAELKGIASQNQCYKSYIGMGYSPVLTPPVILRNMLENPGWYTAYTPYQPEVSQGRLEALLNFQQLTQDLTGLDLASASLLDEATAAAESMALAKRASKLKDANRFFVADDVHPQTLDVVLTRAETFGFDVIVDRAEKVLELDGIFGVLLQQVGTTGELHDYSALLAELKKRKIITSVAADIMALVLLTAPGAQGADVVFGSAQRFGVPMGYGGPHAAFFACRDEFKRSMPGRIIGVSRDAAGNTALRMAMQTREQHIRREKANSNICTSQVLLANIASLYAVYHGPQGLQRIAGRIHRMTDILAAGLQHAGLTLRFKHWFDTLTVEVKDKAAVLARALSFGINLRTDIHGAVGITLNETTSREDIQTLFALFVGDNHGLDIDQLDAAVSQHSQSIQDSMLRRDPILTHPVFNRYHSETEMMRYMHRLERKDLALNQAMIPLGSCTMKLNAAAEMIPITWPEFAELHPFCPPEQAAGYQQMIGQLSQWLVQLTGYDAVCMQPNSGAQGEYAGLLAIRRYHESRNQANRHICLIPSSAHGTNPASAQMAGMSVVVVACDKQGNIDLHDLRQKAEHAGDELSCIMVTYPSTHGVYEETIREVCQIVHQFGGQVYLDGANMNAQVGITTPGYIGADVSHLNLHKTFCIPHGGGGPGMGPIGVKAHLAPFVPGHSVVQIDGMTTQQGAVSAAPFGSASILPISWMYIRMMGADGLKQASQVAILNANYIATRLKNAYPVLYTGHDGRVAHECILDIRPLKEATGISEMDIAKRLIDFGFHAPTMSFPVAGTLMVEPTESESKVELDRFIDAMLAIRAEIEKVAQGEWPLEDNPLVNAPHTQAELVGEWTHPYSRELAVFPVAGVLENKYWPTVKRLDDVYGDRNLFCSCVPISDYE</sequence>
<protein>
    <recommendedName>
        <fullName evidence="1">Glycine dehydrogenase (decarboxylating)</fullName>
        <ecNumber evidence="1">1.4.4.2</ecNumber>
    </recommendedName>
    <alternativeName>
        <fullName evidence="1">Glycine cleavage system P-protein</fullName>
    </alternativeName>
    <alternativeName>
        <fullName evidence="1">Glycine decarboxylase</fullName>
    </alternativeName>
    <alternativeName>
        <fullName evidence="1">Glycine dehydrogenase (aminomethyl-transferring)</fullName>
    </alternativeName>
</protein>
<organism>
    <name type="scientific">Yersinia pestis bv. Antiqua (strain Antiqua)</name>
    <dbReference type="NCBI Taxonomy" id="360102"/>
    <lineage>
        <taxon>Bacteria</taxon>
        <taxon>Pseudomonadati</taxon>
        <taxon>Pseudomonadota</taxon>
        <taxon>Gammaproteobacteria</taxon>
        <taxon>Enterobacterales</taxon>
        <taxon>Yersiniaceae</taxon>
        <taxon>Yersinia</taxon>
    </lineage>
</organism>
<proteinExistence type="inferred from homology"/>
<name>GCSP_YERPA</name>
<reference key="1">
    <citation type="journal article" date="2006" name="J. Bacteriol.">
        <title>Complete genome sequence of Yersinia pestis strains Antiqua and Nepal516: evidence of gene reduction in an emerging pathogen.</title>
        <authorList>
            <person name="Chain P.S.G."/>
            <person name="Hu P."/>
            <person name="Malfatti S.A."/>
            <person name="Radnedge L."/>
            <person name="Larimer F."/>
            <person name="Vergez L.M."/>
            <person name="Worsham P."/>
            <person name="Chu M.C."/>
            <person name="Andersen G.L."/>
        </authorList>
    </citation>
    <scope>NUCLEOTIDE SEQUENCE [LARGE SCALE GENOMIC DNA]</scope>
    <source>
        <strain>Antiqua</strain>
    </source>
</reference>
<dbReference type="EC" id="1.4.4.2" evidence="1"/>
<dbReference type="EMBL" id="CP000308">
    <property type="protein sequence ID" value="ABG12330.1"/>
    <property type="molecule type" value="Genomic_DNA"/>
</dbReference>
<dbReference type="RefSeq" id="WP_002209947.1">
    <property type="nucleotide sequence ID" value="NZ_CP009906.1"/>
</dbReference>
<dbReference type="SMR" id="Q1CB42"/>
<dbReference type="GeneID" id="57973735"/>
<dbReference type="KEGG" id="ypa:YPA_0362"/>
<dbReference type="Proteomes" id="UP000001971">
    <property type="component" value="Chromosome"/>
</dbReference>
<dbReference type="GO" id="GO:0005829">
    <property type="term" value="C:cytosol"/>
    <property type="evidence" value="ECO:0007669"/>
    <property type="project" value="TreeGrafter"/>
</dbReference>
<dbReference type="GO" id="GO:0005960">
    <property type="term" value="C:glycine cleavage complex"/>
    <property type="evidence" value="ECO:0007669"/>
    <property type="project" value="TreeGrafter"/>
</dbReference>
<dbReference type="GO" id="GO:0016594">
    <property type="term" value="F:glycine binding"/>
    <property type="evidence" value="ECO:0007669"/>
    <property type="project" value="TreeGrafter"/>
</dbReference>
<dbReference type="GO" id="GO:0004375">
    <property type="term" value="F:glycine dehydrogenase (decarboxylating) activity"/>
    <property type="evidence" value="ECO:0007669"/>
    <property type="project" value="UniProtKB-EC"/>
</dbReference>
<dbReference type="GO" id="GO:0030170">
    <property type="term" value="F:pyridoxal phosphate binding"/>
    <property type="evidence" value="ECO:0007669"/>
    <property type="project" value="TreeGrafter"/>
</dbReference>
<dbReference type="GO" id="GO:0019464">
    <property type="term" value="P:glycine decarboxylation via glycine cleavage system"/>
    <property type="evidence" value="ECO:0007669"/>
    <property type="project" value="UniProtKB-UniRule"/>
</dbReference>
<dbReference type="CDD" id="cd00613">
    <property type="entry name" value="GDC-P"/>
    <property type="match status" value="2"/>
</dbReference>
<dbReference type="FunFam" id="3.40.640.10:FF:000005">
    <property type="entry name" value="Glycine dehydrogenase (decarboxylating), mitochondrial"/>
    <property type="match status" value="1"/>
</dbReference>
<dbReference type="FunFam" id="3.90.1150.10:FF:000007">
    <property type="entry name" value="Glycine dehydrogenase (decarboxylating), mitochondrial"/>
    <property type="match status" value="1"/>
</dbReference>
<dbReference type="FunFam" id="3.40.640.10:FF:000007">
    <property type="entry name" value="glycine dehydrogenase (Decarboxylating), mitochondrial"/>
    <property type="match status" value="1"/>
</dbReference>
<dbReference type="Gene3D" id="3.90.1150.10">
    <property type="entry name" value="Aspartate Aminotransferase, domain 1"/>
    <property type="match status" value="2"/>
</dbReference>
<dbReference type="Gene3D" id="3.40.640.10">
    <property type="entry name" value="Type I PLP-dependent aspartate aminotransferase-like (Major domain)"/>
    <property type="match status" value="2"/>
</dbReference>
<dbReference type="HAMAP" id="MF_00711">
    <property type="entry name" value="GcvP"/>
    <property type="match status" value="1"/>
</dbReference>
<dbReference type="InterPro" id="IPR003437">
    <property type="entry name" value="GcvP"/>
</dbReference>
<dbReference type="InterPro" id="IPR049316">
    <property type="entry name" value="GDC-P_C"/>
</dbReference>
<dbReference type="InterPro" id="IPR049315">
    <property type="entry name" value="GDC-P_N"/>
</dbReference>
<dbReference type="InterPro" id="IPR020581">
    <property type="entry name" value="GDC_P"/>
</dbReference>
<dbReference type="InterPro" id="IPR015424">
    <property type="entry name" value="PyrdxlP-dep_Trfase"/>
</dbReference>
<dbReference type="InterPro" id="IPR015421">
    <property type="entry name" value="PyrdxlP-dep_Trfase_major"/>
</dbReference>
<dbReference type="InterPro" id="IPR015422">
    <property type="entry name" value="PyrdxlP-dep_Trfase_small"/>
</dbReference>
<dbReference type="NCBIfam" id="TIGR00461">
    <property type="entry name" value="gcvP"/>
    <property type="match status" value="1"/>
</dbReference>
<dbReference type="NCBIfam" id="NF003346">
    <property type="entry name" value="PRK04366.1"/>
    <property type="match status" value="1"/>
</dbReference>
<dbReference type="PANTHER" id="PTHR11773:SF13">
    <property type="entry name" value="GLYCINE DEHYDROGENASE (DECARBOXYLATING)"/>
    <property type="match status" value="1"/>
</dbReference>
<dbReference type="PANTHER" id="PTHR11773">
    <property type="entry name" value="GLYCINE DEHYDROGENASE, DECARBOXYLATING"/>
    <property type="match status" value="1"/>
</dbReference>
<dbReference type="Pfam" id="PF21478">
    <property type="entry name" value="GcvP2_C"/>
    <property type="match status" value="1"/>
</dbReference>
<dbReference type="Pfam" id="PF02347">
    <property type="entry name" value="GDC-P"/>
    <property type="match status" value="2"/>
</dbReference>
<dbReference type="SUPFAM" id="SSF53383">
    <property type="entry name" value="PLP-dependent transferases"/>
    <property type="match status" value="2"/>
</dbReference>
<keyword id="KW-0560">Oxidoreductase</keyword>
<keyword id="KW-0663">Pyridoxal phosphate</keyword>